<sequence length="485" mass="55792">MAEEAILGFLQNNEQITDSGQFSAEFNIDHNELVNVIKSLHGFRYIDVQDIKKETWILTDEGKKYAAEGSPEVQLFLAVPEEGSISKDELQKKLAPAVFKIGCSQAGKNKWVEMGKQVSRKVKDVEDKVKGQLLQIQQGKEFDKESINSLKARKLIVPQIWKGYSVKKGPNYAPERKKVATDLTRENLQNWKELEFKEYNFKAKGAPVDAGHLHALLKVRKQFKDIFVQMGFEEMPTNNYVESSFWNFDALFQPQQHPARDSHDTFFLKVPSTTRTLPEDYVERVKRVHESGGYGSRGYNYDWKREEANKNLLRTHTTAVSSRMLYALAQKPFVPKKYFSIDRVFRNEAVDRTHLAEFHQIEGLICDRGLTLGDLIGVLEDFFSRLGMSKLRFKPAYNPYTEPSMEIFSYHEGLGKWVEIGNSGMFRPEMLLPMGLPEDVRVIAWGLSLERPTMILYGIDNIRDLFGHKVDLDLIKRNPICRIGI</sequence>
<gene>
    <name type="ordered locus">At4g39280</name>
    <name type="ORF">T22F8.180</name>
</gene>
<keyword id="KW-0025">Alternative splicing</keyword>
<keyword id="KW-0030">Aminoacyl-tRNA synthetase</keyword>
<keyword id="KW-0067">ATP-binding</keyword>
<keyword id="KW-0963">Cytoplasm</keyword>
<keyword id="KW-0436">Ligase</keyword>
<keyword id="KW-0460">Magnesium</keyword>
<keyword id="KW-0479">Metal-binding</keyword>
<keyword id="KW-0547">Nucleotide-binding</keyword>
<keyword id="KW-0648">Protein biosynthesis</keyword>
<keyword id="KW-1185">Reference proteome</keyword>
<protein>
    <recommendedName>
        <fullName evidence="4">Phenylalanine--tRNA ligase alpha subunit, cytoplasmic</fullName>
        <ecNumber evidence="4">6.1.1.20</ecNumber>
    </recommendedName>
    <alternativeName>
        <fullName evidence="4">Phenylalanyl-tRNA synthetase alpha subunit</fullName>
        <shortName evidence="4">PheRS</shortName>
    </alternativeName>
</protein>
<proteinExistence type="evidence at transcript level"/>
<accession>Q9T034</accession>
<accession>Q8LPR1</accession>
<comment type="catalytic activity">
    <reaction evidence="4">
        <text>tRNA(Phe) + L-phenylalanine + ATP = L-phenylalanyl-tRNA(Phe) + AMP + diphosphate + H(+)</text>
        <dbReference type="Rhea" id="RHEA:19413"/>
        <dbReference type="Rhea" id="RHEA-COMP:9668"/>
        <dbReference type="Rhea" id="RHEA-COMP:9699"/>
        <dbReference type="ChEBI" id="CHEBI:15378"/>
        <dbReference type="ChEBI" id="CHEBI:30616"/>
        <dbReference type="ChEBI" id="CHEBI:33019"/>
        <dbReference type="ChEBI" id="CHEBI:58095"/>
        <dbReference type="ChEBI" id="CHEBI:78442"/>
        <dbReference type="ChEBI" id="CHEBI:78531"/>
        <dbReference type="ChEBI" id="CHEBI:456215"/>
        <dbReference type="EC" id="6.1.1.20"/>
    </reaction>
</comment>
<comment type="cofactor">
    <cofactor evidence="2">
        <name>Mg(2+)</name>
        <dbReference type="ChEBI" id="CHEBI:18420"/>
    </cofactor>
</comment>
<comment type="subunit">
    <text evidence="1">Tetramer of two alpha and two beta subunits.</text>
</comment>
<comment type="subcellular location">
    <subcellularLocation>
        <location evidence="5 6">Cytoplasm</location>
        <location evidence="5 6">Cytosol</location>
    </subcellularLocation>
</comment>
<comment type="alternative products">
    <event type="alternative splicing"/>
    <isoform>
        <id>Q9T034-1</id>
        <name>1</name>
        <sequence type="displayed"/>
    </isoform>
    <text>A number of isoforms are produced. According to EST sequences.</text>
</comment>
<comment type="similarity">
    <text evidence="4">Belongs to the class-II aminoacyl-tRNA synthetase family. Phe-tRNA synthetase alpha subunit type 2 subfamily.</text>
</comment>
<comment type="sequence caution" evidence="4">
    <conflict type="erroneous gene model prediction">
        <sequence resource="EMBL-CDS" id="CAB43643"/>
    </conflict>
</comment>
<comment type="sequence caution" evidence="4">
    <conflict type="erroneous gene model prediction">
        <sequence resource="EMBL-CDS" id="CAB80591"/>
    </conflict>
</comment>
<name>SYFA_ARATH</name>
<evidence type="ECO:0000250" key="1"/>
<evidence type="ECO:0000250" key="2">
    <source>
        <dbReference type="UniProtKB" id="A5K9S0"/>
    </source>
</evidence>
<evidence type="ECO:0000250" key="3">
    <source>
        <dbReference type="UniProtKB" id="Q9Y285"/>
    </source>
</evidence>
<evidence type="ECO:0000305" key="4"/>
<evidence type="ECO:0000305" key="5">
    <source>
    </source>
</evidence>
<evidence type="ECO:0000305" key="6">
    <source>
    </source>
</evidence>
<organism>
    <name type="scientific">Arabidopsis thaliana</name>
    <name type="common">Mouse-ear cress</name>
    <dbReference type="NCBI Taxonomy" id="3702"/>
    <lineage>
        <taxon>Eukaryota</taxon>
        <taxon>Viridiplantae</taxon>
        <taxon>Streptophyta</taxon>
        <taxon>Embryophyta</taxon>
        <taxon>Tracheophyta</taxon>
        <taxon>Spermatophyta</taxon>
        <taxon>Magnoliopsida</taxon>
        <taxon>eudicotyledons</taxon>
        <taxon>Gunneridae</taxon>
        <taxon>Pentapetalae</taxon>
        <taxon>rosids</taxon>
        <taxon>malvids</taxon>
        <taxon>Brassicales</taxon>
        <taxon>Brassicaceae</taxon>
        <taxon>Camelineae</taxon>
        <taxon>Arabidopsis</taxon>
    </lineage>
</organism>
<dbReference type="EC" id="6.1.1.20" evidence="4"/>
<dbReference type="EMBL" id="AL050351">
    <property type="protein sequence ID" value="CAB43643.1"/>
    <property type="status" value="ALT_SEQ"/>
    <property type="molecule type" value="Genomic_DNA"/>
</dbReference>
<dbReference type="EMBL" id="AL161594">
    <property type="protein sequence ID" value="CAB80591.1"/>
    <property type="status" value="ALT_SEQ"/>
    <property type="molecule type" value="Genomic_DNA"/>
</dbReference>
<dbReference type="EMBL" id="CP002687">
    <property type="protein sequence ID" value="AEE87050.1"/>
    <property type="molecule type" value="Genomic_DNA"/>
</dbReference>
<dbReference type="EMBL" id="AY094460">
    <property type="protein sequence ID" value="AAM19830.1"/>
    <property type="molecule type" value="mRNA"/>
</dbReference>
<dbReference type="EMBL" id="BT002310">
    <property type="protein sequence ID" value="AAN73307.1"/>
    <property type="molecule type" value="mRNA"/>
</dbReference>
<dbReference type="RefSeq" id="NP_195639.2">
    <molecule id="Q9T034-1"/>
    <property type="nucleotide sequence ID" value="NM_120089.5"/>
</dbReference>
<dbReference type="SMR" id="Q9T034"/>
<dbReference type="BioGRID" id="15364">
    <property type="interactions" value="2"/>
</dbReference>
<dbReference type="FunCoup" id="Q9T034">
    <property type="interactions" value="4811"/>
</dbReference>
<dbReference type="STRING" id="3702.Q9T034"/>
<dbReference type="PaxDb" id="3702-AT4G39280.2"/>
<dbReference type="ProteomicsDB" id="232980">
    <molecule id="Q9T034-1"/>
</dbReference>
<dbReference type="DNASU" id="830084"/>
<dbReference type="EnsemblPlants" id="AT4G39280.1">
    <molecule id="Q9T034-1"/>
    <property type="protein sequence ID" value="AT4G39280.1"/>
    <property type="gene ID" value="AT4G39280"/>
</dbReference>
<dbReference type="GeneID" id="830084"/>
<dbReference type="Gramene" id="AT4G39280.1">
    <molecule id="Q9T034-1"/>
    <property type="protein sequence ID" value="AT4G39280.1"/>
    <property type="gene ID" value="AT4G39280"/>
</dbReference>
<dbReference type="KEGG" id="ath:AT4G39280"/>
<dbReference type="Araport" id="AT4G39280"/>
<dbReference type="TAIR" id="AT4G39280"/>
<dbReference type="eggNOG" id="KOG2784">
    <property type="taxonomic scope" value="Eukaryota"/>
</dbReference>
<dbReference type="HOGENOM" id="CLU_025086_2_2_1"/>
<dbReference type="InParanoid" id="Q9T034"/>
<dbReference type="OMA" id="QIEGWVM"/>
<dbReference type="OrthoDB" id="238316at2759"/>
<dbReference type="PhylomeDB" id="Q9T034"/>
<dbReference type="PRO" id="PR:Q9T034"/>
<dbReference type="Proteomes" id="UP000006548">
    <property type="component" value="Chromosome 4"/>
</dbReference>
<dbReference type="ExpressionAtlas" id="Q9T034">
    <property type="expression patterns" value="baseline and differential"/>
</dbReference>
<dbReference type="GO" id="GO:0005829">
    <property type="term" value="C:cytosol"/>
    <property type="evidence" value="ECO:0007669"/>
    <property type="project" value="UniProtKB-SubCell"/>
</dbReference>
<dbReference type="GO" id="GO:0005886">
    <property type="term" value="C:plasma membrane"/>
    <property type="evidence" value="ECO:0007005"/>
    <property type="project" value="TAIR"/>
</dbReference>
<dbReference type="GO" id="GO:0005524">
    <property type="term" value="F:ATP binding"/>
    <property type="evidence" value="ECO:0007669"/>
    <property type="project" value="UniProtKB-KW"/>
</dbReference>
<dbReference type="GO" id="GO:0000287">
    <property type="term" value="F:magnesium ion binding"/>
    <property type="evidence" value="ECO:0000250"/>
    <property type="project" value="UniProtKB"/>
</dbReference>
<dbReference type="GO" id="GO:0004826">
    <property type="term" value="F:phenylalanine-tRNA ligase activity"/>
    <property type="evidence" value="ECO:0007669"/>
    <property type="project" value="UniProtKB-EC"/>
</dbReference>
<dbReference type="GO" id="GO:0000049">
    <property type="term" value="F:tRNA binding"/>
    <property type="evidence" value="ECO:0007669"/>
    <property type="project" value="InterPro"/>
</dbReference>
<dbReference type="GO" id="GO:0006432">
    <property type="term" value="P:phenylalanyl-tRNA aminoacylation"/>
    <property type="evidence" value="ECO:0007669"/>
    <property type="project" value="InterPro"/>
</dbReference>
<dbReference type="CDD" id="cd00496">
    <property type="entry name" value="PheRS_alpha_core"/>
    <property type="match status" value="1"/>
</dbReference>
<dbReference type="FunFam" id="3.30.930.10:FF:000033">
    <property type="entry name" value="Phenylalanine--tRNA ligase alpha subunit"/>
    <property type="match status" value="1"/>
</dbReference>
<dbReference type="FunFam" id="1.10.10.2330:FF:000004">
    <property type="entry name" value="Phenylalanine--tRNA ligase alpha subunit, cytoplasmic"/>
    <property type="match status" value="1"/>
</dbReference>
<dbReference type="Gene3D" id="1.10.10.2320">
    <property type="match status" value="1"/>
</dbReference>
<dbReference type="Gene3D" id="1.10.10.2330">
    <property type="match status" value="1"/>
</dbReference>
<dbReference type="Gene3D" id="3.30.1370.240">
    <property type="match status" value="1"/>
</dbReference>
<dbReference type="Gene3D" id="3.30.930.10">
    <property type="entry name" value="Bira Bifunctional Protein, Domain 2"/>
    <property type="match status" value="1"/>
</dbReference>
<dbReference type="InterPro" id="IPR006195">
    <property type="entry name" value="aa-tRNA-synth_II"/>
</dbReference>
<dbReference type="InterPro" id="IPR045864">
    <property type="entry name" value="aa-tRNA-synth_II/BPL/LPL"/>
</dbReference>
<dbReference type="InterPro" id="IPR004529">
    <property type="entry name" value="Phe-tRNA-synth_IIc_asu"/>
</dbReference>
<dbReference type="InterPro" id="IPR002319">
    <property type="entry name" value="Phenylalanyl-tRNA_Synthase"/>
</dbReference>
<dbReference type="InterPro" id="IPR040724">
    <property type="entry name" value="PheRS_DBD1"/>
</dbReference>
<dbReference type="InterPro" id="IPR040725">
    <property type="entry name" value="PheRS_DBD3"/>
</dbReference>
<dbReference type="NCBIfam" id="TIGR00468">
    <property type="entry name" value="pheS"/>
    <property type="match status" value="1"/>
</dbReference>
<dbReference type="NCBIfam" id="NF003210">
    <property type="entry name" value="PRK04172.1"/>
    <property type="match status" value="1"/>
</dbReference>
<dbReference type="PANTHER" id="PTHR11538:SF40">
    <property type="entry name" value="PHENYLALANINE--TRNA LIGASE ALPHA SUBUNIT"/>
    <property type="match status" value="1"/>
</dbReference>
<dbReference type="PANTHER" id="PTHR11538">
    <property type="entry name" value="PHENYLALANYL-TRNA SYNTHETASE"/>
    <property type="match status" value="1"/>
</dbReference>
<dbReference type="Pfam" id="PF18552">
    <property type="entry name" value="PheRS_DBD1"/>
    <property type="match status" value="1"/>
</dbReference>
<dbReference type="Pfam" id="PF18553">
    <property type="entry name" value="PheRS_DBD3"/>
    <property type="match status" value="1"/>
</dbReference>
<dbReference type="Pfam" id="PF01409">
    <property type="entry name" value="tRNA-synt_2d"/>
    <property type="match status" value="1"/>
</dbReference>
<dbReference type="SUPFAM" id="SSF55681">
    <property type="entry name" value="Class II aaRS and biotin synthetases"/>
    <property type="match status" value="1"/>
</dbReference>
<dbReference type="PROSITE" id="PS50862">
    <property type="entry name" value="AA_TRNA_LIGASE_II"/>
    <property type="match status" value="1"/>
</dbReference>
<feature type="chain" id="PRO_0000126826" description="Phenylalanine--tRNA ligase alpha subunit, cytoplasmic">
    <location>
        <begin position="1"/>
        <end position="485"/>
    </location>
</feature>
<feature type="binding site" evidence="3">
    <location>
        <position position="318"/>
    </location>
    <ligand>
        <name>L-phenylalanine</name>
        <dbReference type="ChEBI" id="CHEBI:58095"/>
    </ligand>
</feature>
<feature type="binding site" evidence="3">
    <location>
        <begin position="360"/>
        <end position="362"/>
    </location>
    <ligand>
        <name>L-phenylalanine</name>
        <dbReference type="ChEBI" id="CHEBI:58095"/>
    </ligand>
</feature>
<feature type="binding site" evidence="3">
    <location>
        <position position="400"/>
    </location>
    <ligand>
        <name>L-phenylalanine</name>
        <dbReference type="ChEBI" id="CHEBI:58095"/>
    </ligand>
</feature>
<feature type="binding site" evidence="2">
    <location>
        <position position="402"/>
    </location>
    <ligand>
        <name>Mg(2+)</name>
        <dbReference type="ChEBI" id="CHEBI:18420"/>
        <note>shared with beta subunit</note>
    </ligand>
</feature>
<feature type="binding site" evidence="3">
    <location>
        <position position="426"/>
    </location>
    <ligand>
        <name>L-phenylalanine</name>
        <dbReference type="ChEBI" id="CHEBI:58095"/>
    </ligand>
</feature>
<reference key="1">
    <citation type="journal article" date="1999" name="Nature">
        <title>Sequence and analysis of chromosome 4 of the plant Arabidopsis thaliana.</title>
        <authorList>
            <person name="Mayer K.F.X."/>
            <person name="Schueller C."/>
            <person name="Wambutt R."/>
            <person name="Murphy G."/>
            <person name="Volckaert G."/>
            <person name="Pohl T."/>
            <person name="Duesterhoeft A."/>
            <person name="Stiekema W."/>
            <person name="Entian K.-D."/>
            <person name="Terryn N."/>
            <person name="Harris B."/>
            <person name="Ansorge W."/>
            <person name="Brandt P."/>
            <person name="Grivell L.A."/>
            <person name="Rieger M."/>
            <person name="Weichselgartner M."/>
            <person name="de Simone V."/>
            <person name="Obermaier B."/>
            <person name="Mache R."/>
            <person name="Mueller M."/>
            <person name="Kreis M."/>
            <person name="Delseny M."/>
            <person name="Puigdomenech P."/>
            <person name="Watson M."/>
            <person name="Schmidtheini T."/>
            <person name="Reichert B."/>
            <person name="Portetelle D."/>
            <person name="Perez-Alonso M."/>
            <person name="Boutry M."/>
            <person name="Bancroft I."/>
            <person name="Vos P."/>
            <person name="Hoheisel J."/>
            <person name="Zimmermann W."/>
            <person name="Wedler H."/>
            <person name="Ridley P."/>
            <person name="Langham S.-A."/>
            <person name="McCullagh B."/>
            <person name="Bilham L."/>
            <person name="Robben J."/>
            <person name="van der Schueren J."/>
            <person name="Grymonprez B."/>
            <person name="Chuang Y.-J."/>
            <person name="Vandenbussche F."/>
            <person name="Braeken M."/>
            <person name="Weltjens I."/>
            <person name="Voet M."/>
            <person name="Bastiaens I."/>
            <person name="Aert R."/>
            <person name="Defoor E."/>
            <person name="Weitzenegger T."/>
            <person name="Bothe G."/>
            <person name="Ramsperger U."/>
            <person name="Hilbert H."/>
            <person name="Braun M."/>
            <person name="Holzer E."/>
            <person name="Brandt A."/>
            <person name="Peters S."/>
            <person name="van Staveren M."/>
            <person name="Dirkse W."/>
            <person name="Mooijman P."/>
            <person name="Klein Lankhorst R."/>
            <person name="Rose M."/>
            <person name="Hauf J."/>
            <person name="Koetter P."/>
            <person name="Berneiser S."/>
            <person name="Hempel S."/>
            <person name="Feldpausch M."/>
            <person name="Lamberth S."/>
            <person name="Van den Daele H."/>
            <person name="De Keyser A."/>
            <person name="Buysshaert C."/>
            <person name="Gielen J."/>
            <person name="Villarroel R."/>
            <person name="De Clercq R."/>
            <person name="van Montagu M."/>
            <person name="Rogers J."/>
            <person name="Cronin A."/>
            <person name="Quail M.A."/>
            <person name="Bray-Allen S."/>
            <person name="Clark L."/>
            <person name="Doggett J."/>
            <person name="Hall S."/>
            <person name="Kay M."/>
            <person name="Lennard N."/>
            <person name="McLay K."/>
            <person name="Mayes R."/>
            <person name="Pettett A."/>
            <person name="Rajandream M.A."/>
            <person name="Lyne M."/>
            <person name="Benes V."/>
            <person name="Rechmann S."/>
            <person name="Borkova D."/>
            <person name="Bloecker H."/>
            <person name="Scharfe M."/>
            <person name="Grimm M."/>
            <person name="Loehnert T.-H."/>
            <person name="Dose S."/>
            <person name="de Haan M."/>
            <person name="Maarse A.C."/>
            <person name="Schaefer M."/>
            <person name="Mueller-Auer S."/>
            <person name="Gabel C."/>
            <person name="Fuchs M."/>
            <person name="Fartmann B."/>
            <person name="Granderath K."/>
            <person name="Dauner D."/>
            <person name="Herzl A."/>
            <person name="Neumann S."/>
            <person name="Argiriou A."/>
            <person name="Vitale D."/>
            <person name="Liguori R."/>
            <person name="Piravandi E."/>
            <person name="Massenet O."/>
            <person name="Quigley F."/>
            <person name="Clabauld G."/>
            <person name="Muendlein A."/>
            <person name="Felber R."/>
            <person name="Schnabl S."/>
            <person name="Hiller R."/>
            <person name="Schmidt W."/>
            <person name="Lecharny A."/>
            <person name="Aubourg S."/>
            <person name="Chefdor F."/>
            <person name="Cooke R."/>
            <person name="Berger C."/>
            <person name="Monfort A."/>
            <person name="Casacuberta E."/>
            <person name="Gibbons T."/>
            <person name="Weber N."/>
            <person name="Vandenbol M."/>
            <person name="Bargues M."/>
            <person name="Terol J."/>
            <person name="Torres A."/>
            <person name="Perez-Perez A."/>
            <person name="Purnelle B."/>
            <person name="Bent E."/>
            <person name="Johnson S."/>
            <person name="Tacon D."/>
            <person name="Jesse T."/>
            <person name="Heijnen L."/>
            <person name="Schwarz S."/>
            <person name="Scholler P."/>
            <person name="Heber S."/>
            <person name="Francs P."/>
            <person name="Bielke C."/>
            <person name="Frishman D."/>
            <person name="Haase D."/>
            <person name="Lemcke K."/>
            <person name="Mewes H.-W."/>
            <person name="Stocker S."/>
            <person name="Zaccaria P."/>
            <person name="Bevan M."/>
            <person name="Wilson R.K."/>
            <person name="de la Bastide M."/>
            <person name="Habermann K."/>
            <person name="Parnell L."/>
            <person name="Dedhia N."/>
            <person name="Gnoj L."/>
            <person name="Schutz K."/>
            <person name="Huang E."/>
            <person name="Spiegel L."/>
            <person name="Sekhon M."/>
            <person name="Murray J."/>
            <person name="Sheet P."/>
            <person name="Cordes M."/>
            <person name="Abu-Threideh J."/>
            <person name="Stoneking T."/>
            <person name="Kalicki J."/>
            <person name="Graves T."/>
            <person name="Harmon G."/>
            <person name="Edwards J."/>
            <person name="Latreille P."/>
            <person name="Courtney L."/>
            <person name="Cloud J."/>
            <person name="Abbott A."/>
            <person name="Scott K."/>
            <person name="Johnson D."/>
            <person name="Minx P."/>
            <person name="Bentley D."/>
            <person name="Fulton B."/>
            <person name="Miller N."/>
            <person name="Greco T."/>
            <person name="Kemp K."/>
            <person name="Kramer J."/>
            <person name="Fulton L."/>
            <person name="Mardis E."/>
            <person name="Dante M."/>
            <person name="Pepin K."/>
            <person name="Hillier L.W."/>
            <person name="Nelson J."/>
            <person name="Spieth J."/>
            <person name="Ryan E."/>
            <person name="Andrews S."/>
            <person name="Geisel C."/>
            <person name="Layman D."/>
            <person name="Du H."/>
            <person name="Ali J."/>
            <person name="Berghoff A."/>
            <person name="Jones K."/>
            <person name="Drone K."/>
            <person name="Cotton M."/>
            <person name="Joshu C."/>
            <person name="Antonoiu B."/>
            <person name="Zidanic M."/>
            <person name="Strong C."/>
            <person name="Sun H."/>
            <person name="Lamar B."/>
            <person name="Yordan C."/>
            <person name="Ma P."/>
            <person name="Zhong J."/>
            <person name="Preston R."/>
            <person name="Vil D."/>
            <person name="Shekher M."/>
            <person name="Matero A."/>
            <person name="Shah R."/>
            <person name="Swaby I.K."/>
            <person name="O'Shaughnessy A."/>
            <person name="Rodriguez M."/>
            <person name="Hoffman J."/>
            <person name="Till S."/>
            <person name="Granat S."/>
            <person name="Shohdy N."/>
            <person name="Hasegawa A."/>
            <person name="Hameed A."/>
            <person name="Lodhi M."/>
            <person name="Johnson A."/>
            <person name="Chen E."/>
            <person name="Marra M.A."/>
            <person name="Martienssen R."/>
            <person name="McCombie W.R."/>
        </authorList>
    </citation>
    <scope>NUCLEOTIDE SEQUENCE [LARGE SCALE GENOMIC DNA]</scope>
    <source>
        <strain>cv. Columbia</strain>
    </source>
</reference>
<reference key="2">
    <citation type="journal article" date="2017" name="Plant J.">
        <title>Araport11: a complete reannotation of the Arabidopsis thaliana reference genome.</title>
        <authorList>
            <person name="Cheng C.Y."/>
            <person name="Krishnakumar V."/>
            <person name="Chan A.P."/>
            <person name="Thibaud-Nissen F."/>
            <person name="Schobel S."/>
            <person name="Town C.D."/>
        </authorList>
    </citation>
    <scope>GENOME REANNOTATION</scope>
    <source>
        <strain>cv. Columbia</strain>
    </source>
</reference>
<reference key="3">
    <citation type="journal article" date="2003" name="Science">
        <title>Empirical analysis of transcriptional activity in the Arabidopsis genome.</title>
        <authorList>
            <person name="Yamada K."/>
            <person name="Lim J."/>
            <person name="Dale J.M."/>
            <person name="Chen H."/>
            <person name="Shinn P."/>
            <person name="Palm C.J."/>
            <person name="Southwick A.M."/>
            <person name="Wu H.C."/>
            <person name="Kim C.J."/>
            <person name="Nguyen M."/>
            <person name="Pham P.K."/>
            <person name="Cheuk R.F."/>
            <person name="Karlin-Newmann G."/>
            <person name="Liu S.X."/>
            <person name="Lam B."/>
            <person name="Sakano H."/>
            <person name="Wu T."/>
            <person name="Yu G."/>
            <person name="Miranda M."/>
            <person name="Quach H.L."/>
            <person name="Tripp M."/>
            <person name="Chang C.H."/>
            <person name="Lee J.M."/>
            <person name="Toriumi M.J."/>
            <person name="Chan M.M."/>
            <person name="Tang C.C."/>
            <person name="Onodera C.S."/>
            <person name="Deng J.M."/>
            <person name="Akiyama K."/>
            <person name="Ansari Y."/>
            <person name="Arakawa T."/>
            <person name="Banh J."/>
            <person name="Banno F."/>
            <person name="Bowser L."/>
            <person name="Brooks S.Y."/>
            <person name="Carninci P."/>
            <person name="Chao Q."/>
            <person name="Choy N."/>
            <person name="Enju A."/>
            <person name="Goldsmith A.D."/>
            <person name="Gurjal M."/>
            <person name="Hansen N.F."/>
            <person name="Hayashizaki Y."/>
            <person name="Johnson-Hopson C."/>
            <person name="Hsuan V.W."/>
            <person name="Iida K."/>
            <person name="Karnes M."/>
            <person name="Khan S."/>
            <person name="Koesema E."/>
            <person name="Ishida J."/>
            <person name="Jiang P.X."/>
            <person name="Jones T."/>
            <person name="Kawai J."/>
            <person name="Kamiya A."/>
            <person name="Meyers C."/>
            <person name="Nakajima M."/>
            <person name="Narusaka M."/>
            <person name="Seki M."/>
            <person name="Sakurai T."/>
            <person name="Satou M."/>
            <person name="Tamse R."/>
            <person name="Vaysberg M."/>
            <person name="Wallender E.K."/>
            <person name="Wong C."/>
            <person name="Yamamura Y."/>
            <person name="Yuan S."/>
            <person name="Shinozaki K."/>
            <person name="Davis R.W."/>
            <person name="Theologis A."/>
            <person name="Ecker J.R."/>
        </authorList>
    </citation>
    <scope>NUCLEOTIDE SEQUENCE [LARGE SCALE MRNA]</scope>
    <source>
        <strain>cv. Columbia</strain>
    </source>
</reference>
<reference key="4">
    <citation type="journal article" date="2005" name="Plant J.">
        <title>Requirement of aminoacyl-tRNA synthetases for gametogenesis and embryo development in Arabidopsis.</title>
        <authorList>
            <person name="Berg M."/>
            <person name="Rogers R."/>
            <person name="Muralla R."/>
            <person name="Meinke D."/>
        </authorList>
    </citation>
    <scope>SUBCELLULAR LOCATION</scope>
</reference>
<reference key="5">
    <citation type="journal article" date="2005" name="Proc. Natl. Acad. Sci. U.S.A.">
        <title>Dual targeting is the rule for organellar aminoacyl-tRNA synthetases in Arabidopsis thaliana.</title>
        <authorList>
            <person name="Duchene A.-M."/>
            <person name="Giritch A."/>
            <person name="Hoffmann B."/>
            <person name="Cognat V."/>
            <person name="Lancelin D."/>
            <person name="Peeters N.M."/>
            <person name="Zaepfel M."/>
            <person name="Marechal-Drouard L."/>
            <person name="Small I.D."/>
        </authorList>
    </citation>
    <scope>SUBCELLULAR LOCATION</scope>
</reference>